<organism>
    <name type="scientific">Danio rerio</name>
    <name type="common">Zebrafish</name>
    <name type="synonym">Brachydanio rerio</name>
    <dbReference type="NCBI Taxonomy" id="7955"/>
    <lineage>
        <taxon>Eukaryota</taxon>
        <taxon>Metazoa</taxon>
        <taxon>Chordata</taxon>
        <taxon>Craniata</taxon>
        <taxon>Vertebrata</taxon>
        <taxon>Euteleostomi</taxon>
        <taxon>Actinopterygii</taxon>
        <taxon>Neopterygii</taxon>
        <taxon>Teleostei</taxon>
        <taxon>Ostariophysi</taxon>
        <taxon>Cypriniformes</taxon>
        <taxon>Danionidae</taxon>
        <taxon>Danioninae</taxon>
        <taxon>Danio</taxon>
    </lineage>
</organism>
<feature type="chain" id="PRO_0000144790" description="Claudin-like protein ZF-A89">
    <location>
        <begin position="1"/>
        <end position="208"/>
    </location>
</feature>
<feature type="transmembrane region" description="Helical" evidence="1">
    <location>
        <begin position="8"/>
        <end position="28"/>
    </location>
</feature>
<feature type="transmembrane region" description="Helical" evidence="1">
    <location>
        <begin position="82"/>
        <end position="102"/>
    </location>
</feature>
<feature type="transmembrane region" description="Helical" evidence="1">
    <location>
        <begin position="117"/>
        <end position="137"/>
    </location>
</feature>
<feature type="transmembrane region" description="Helical" evidence="1">
    <location>
        <begin position="160"/>
        <end position="180"/>
    </location>
</feature>
<protein>
    <recommendedName>
        <fullName>Claudin-like protein ZF-A89</fullName>
    </recommendedName>
    <alternativeName>
        <fullName>Claudin d</fullName>
    </alternativeName>
</protein>
<evidence type="ECO:0000255" key="1"/>
<evidence type="ECO:0000305" key="2"/>
<reference key="1">
    <citation type="submission" date="1998-10" db="EMBL/GenBank/DDBJ databases">
        <authorList>
            <person name="Keen T.J."/>
            <person name="Inglehearn C.F."/>
        </authorList>
    </citation>
    <scope>NUCLEOTIDE SEQUENCE [MRNA]</scope>
</reference>
<reference key="2">
    <citation type="submission" date="2004-07" db="EMBL/GenBank/DDBJ databases">
        <authorList>
            <consortium name="NIH - Zebrafish Gene Collection (ZGC) project"/>
        </authorList>
    </citation>
    <scope>NUCLEOTIDE SEQUENCE [LARGE SCALE MRNA]</scope>
    <source>
        <tissue>Embryo</tissue>
    </source>
</reference>
<keyword id="KW-0965">Cell junction</keyword>
<keyword id="KW-1003">Cell membrane</keyword>
<keyword id="KW-0472">Membrane</keyword>
<keyword id="KW-1185">Reference proteome</keyword>
<keyword id="KW-0796">Tight junction</keyword>
<keyword id="KW-0812">Transmembrane</keyword>
<keyword id="KW-1133">Transmembrane helix</keyword>
<comment type="function">
    <text>Component of tight junction (TJ) strands.</text>
</comment>
<comment type="subcellular location">
    <subcellularLocation>
        <location>Cell membrane</location>
        <topology>Multi-pass membrane protein</topology>
    </subcellularLocation>
    <subcellularLocation>
        <location>Cell junction</location>
        <location>Tight junction</location>
    </subcellularLocation>
</comment>
<comment type="similarity">
    <text evidence="2">Belongs to the claudin family.</text>
</comment>
<proteinExistence type="evidence at transcript level"/>
<name>CLDY_DANRE</name>
<sequence length="208" mass="22205">MASVGLQLLATVLAIIGWLGEIVICALPMWKVTAFIGNNIVTAQIFWEGLWMNCVQQSTGQMQCKVYDSMLALPQDLQAARALVVISIIVTFMGVFLTIAGGKCTNCIEDQDAKAKVVVAAGVFFLVGGILCLIPVCWSANSVIKDFYNPTLSDAQKRELGASLFIGWCASGLLLLGGALLCCQCPKNEGRAYSVKYSAPRSAPGAYV</sequence>
<accession>Q9YH91</accession>
<gene>
    <name type="primary">cldnd</name>
</gene>
<dbReference type="EMBL" id="AJ011789">
    <property type="protein sequence ID" value="CAA09777.1"/>
    <property type="molecule type" value="mRNA"/>
</dbReference>
<dbReference type="EMBL" id="BC078260">
    <property type="protein sequence ID" value="AAH78260.1"/>
    <property type="molecule type" value="mRNA"/>
</dbReference>
<dbReference type="RefSeq" id="NP_851295.1">
    <property type="nucleotide sequence ID" value="NM_180964.2"/>
</dbReference>
<dbReference type="SMR" id="Q9YH91"/>
<dbReference type="FunCoup" id="Q9YH91">
    <property type="interactions" value="1079"/>
</dbReference>
<dbReference type="STRING" id="7955.ENSDARP00000025766"/>
<dbReference type="PaxDb" id="7955-ENSDARP00000025766"/>
<dbReference type="Ensembl" id="ENSDART00000021620">
    <property type="protein sequence ID" value="ENSDARP00000025766"/>
    <property type="gene ID" value="ENSDARG00000006580"/>
</dbReference>
<dbReference type="GeneID" id="81583"/>
<dbReference type="KEGG" id="dre:81583"/>
<dbReference type="AGR" id="ZFIN:ZDB-GENE-010328-4"/>
<dbReference type="CTD" id="81583"/>
<dbReference type="ZFIN" id="ZDB-GENE-010328-4">
    <property type="gene designation" value="cldnd"/>
</dbReference>
<dbReference type="eggNOG" id="ENOG502QSCN">
    <property type="taxonomic scope" value="Eukaryota"/>
</dbReference>
<dbReference type="HOGENOM" id="CLU_076370_1_2_1"/>
<dbReference type="InParanoid" id="Q9YH91"/>
<dbReference type="OMA" id="LCCQCKQ"/>
<dbReference type="OrthoDB" id="8830244at2759"/>
<dbReference type="PhylomeDB" id="Q9YH91"/>
<dbReference type="TreeFam" id="TF331936"/>
<dbReference type="PRO" id="PR:Q9YH91"/>
<dbReference type="Proteomes" id="UP000000437">
    <property type="component" value="Chromosome 21"/>
</dbReference>
<dbReference type="Bgee" id="ENSDARG00000006580">
    <property type="expression patterns" value="Expressed in cleaving embryo and 20 other cell types or tissues"/>
</dbReference>
<dbReference type="GO" id="GO:0005923">
    <property type="term" value="C:bicellular tight junction"/>
    <property type="evidence" value="ECO:0000250"/>
    <property type="project" value="UniProtKB"/>
</dbReference>
<dbReference type="GO" id="GO:0005886">
    <property type="term" value="C:plasma membrane"/>
    <property type="evidence" value="ECO:0000318"/>
    <property type="project" value="GO_Central"/>
</dbReference>
<dbReference type="GO" id="GO:0042802">
    <property type="term" value="F:identical protein binding"/>
    <property type="evidence" value="ECO:0000250"/>
    <property type="project" value="UniProtKB"/>
</dbReference>
<dbReference type="GO" id="GO:0005198">
    <property type="term" value="F:structural molecule activity"/>
    <property type="evidence" value="ECO:0007669"/>
    <property type="project" value="InterPro"/>
</dbReference>
<dbReference type="GO" id="GO:0070830">
    <property type="term" value="P:bicellular tight junction assembly"/>
    <property type="evidence" value="ECO:0000318"/>
    <property type="project" value="GO_Central"/>
</dbReference>
<dbReference type="GO" id="GO:0016338">
    <property type="term" value="P:calcium-independent cell-cell adhesion via plasma membrane cell-adhesion molecules"/>
    <property type="evidence" value="ECO:0000250"/>
    <property type="project" value="UniProtKB"/>
</dbReference>
<dbReference type="GO" id="GO:0007155">
    <property type="term" value="P:cell adhesion"/>
    <property type="evidence" value="ECO:0000318"/>
    <property type="project" value="GO_Central"/>
</dbReference>
<dbReference type="FunFam" id="1.20.140.150:FF:000001">
    <property type="entry name" value="Claudin"/>
    <property type="match status" value="1"/>
</dbReference>
<dbReference type="Gene3D" id="1.20.140.150">
    <property type="match status" value="1"/>
</dbReference>
<dbReference type="InterPro" id="IPR006187">
    <property type="entry name" value="Claudin"/>
</dbReference>
<dbReference type="InterPro" id="IPR017974">
    <property type="entry name" value="Claudin_CS"/>
</dbReference>
<dbReference type="InterPro" id="IPR004031">
    <property type="entry name" value="PMP22/EMP/MP20/Claudin"/>
</dbReference>
<dbReference type="PANTHER" id="PTHR12002">
    <property type="entry name" value="CLAUDIN"/>
    <property type="match status" value="1"/>
</dbReference>
<dbReference type="Pfam" id="PF00822">
    <property type="entry name" value="PMP22_Claudin"/>
    <property type="match status" value="1"/>
</dbReference>
<dbReference type="PRINTS" id="PR01077">
    <property type="entry name" value="CLAUDIN"/>
</dbReference>
<dbReference type="PROSITE" id="PS01346">
    <property type="entry name" value="CLAUDIN"/>
    <property type="match status" value="1"/>
</dbReference>